<evidence type="ECO:0000255" key="1">
    <source>
        <dbReference type="PROSITE-ProRule" id="PRU00227"/>
    </source>
</evidence>
<evidence type="ECO:0000256" key="2">
    <source>
        <dbReference type="SAM" id="MobiDB-lite"/>
    </source>
</evidence>
<evidence type="ECO:0000269" key="3">
    <source>
    </source>
</evidence>
<evidence type="ECO:0000269" key="4">
    <source>
    </source>
</evidence>
<evidence type="ECO:0000305" key="5"/>
<evidence type="ECO:0007744" key="6">
    <source>
    </source>
</evidence>
<evidence type="ECO:0007744" key="7">
    <source>
    </source>
</evidence>
<feature type="chain" id="PRO_0000114942" description="Activatory protein CHA4">
    <location>
        <begin position="1"/>
        <end position="648"/>
    </location>
</feature>
<feature type="DNA-binding region" description="Zn(2)-C6 fungal-type" evidence="1">
    <location>
        <begin position="44"/>
        <end position="70"/>
    </location>
</feature>
<feature type="region of interest" description="Disordered" evidence="2">
    <location>
        <begin position="1"/>
        <end position="37"/>
    </location>
</feature>
<feature type="region of interest" description="Disordered" evidence="2">
    <location>
        <begin position="140"/>
        <end position="177"/>
    </location>
</feature>
<feature type="compositionally biased region" description="Pro residues" evidence="2">
    <location>
        <begin position="1"/>
        <end position="10"/>
    </location>
</feature>
<feature type="compositionally biased region" description="Low complexity" evidence="2">
    <location>
        <begin position="11"/>
        <end position="22"/>
    </location>
</feature>
<feature type="modified residue" description="Phosphoserine" evidence="6 7">
    <location>
        <position position="164"/>
    </location>
</feature>
<feature type="modified residue" description="Phosphoserine" evidence="7">
    <location>
        <position position="166"/>
    </location>
</feature>
<proteinExistence type="evidence at protein level"/>
<sequence length="648" mass="74393">MMLEPSPPPLTTTVTPSLPSSLKKSVTDNDQNNNNVPRKRKLACQNCRRRRRKCNMEKPCSNCIKFRTECVFTQQDLRNKRYSTTYVEALQSQIRSLKEQLQILSSSSSTIASNALSSLKNNSDHGDAPNEKILKYGETAQSALPSSESNDENESDAFTKKMPSESPPPVGTNSIYPSNSLSIIKKKTDGSTRYQQQQVSLKNLSRSPLILRSLSLFFKWLYPGHYLFIHRETFLSAFFGDTNTKSYYCSEELVFAIAALGSLISYKSETELFQQSEVFYQRAKTIVLKKIFQLEDSSLAESSSSSKLAIIQTLLCLAFYDIGSGENPMAWYLSGLAFRIAHEIGLHLNPEAWSNVYEDELSIMDFEVRSRIYWGCYIADHLIAILFGRSTSLRLSNSTVPETDELPEIETGIEEYIYDPKVILSTANPLKKLIVLSRITEIFASKIFSPNETLLQRSEYLAKFNLEVYNWRRDLPPELQWTKRSLMEMTDFNPTIAYVWFHYYIVLISYNKPFIYEIKQSRELVEGYVDELYYLLKVWKNKFKTFEKATIYMIYSAILAIQCMKSNLIKKDRKQDFLNFLSAPTLNYELARKFIENSEDALHNSETMDLLGTLSHGNDFALEYNFDFTLLNEIDMLIGGNTNDGLSK</sequence>
<gene>
    <name type="primary">CHA4</name>
    <name type="synonym">SIL2</name>
    <name type="synonym">SIL3</name>
    <name type="ordered locus">YLR098C</name>
    <name type="ORF">L8004.8</name>
</gene>
<name>CHA4_YEAST</name>
<reference key="1">
    <citation type="journal article" date="1996" name="Genetics">
        <title>Cha4p of Saccharomyces cerevisiae activates transcription via serine/threonine response elements.</title>
        <authorList>
            <person name="Holmberg S."/>
            <person name="Schjerling P."/>
        </authorList>
    </citation>
    <scope>NUCLEOTIDE SEQUENCE [GENOMIC DNA]</scope>
    <scope>FUNCTION</scope>
    <source>
        <strain>ATCC 204508 / S288c</strain>
    </source>
</reference>
<reference key="2">
    <citation type="journal article" date="1997" name="Nature">
        <title>The nucleotide sequence of Saccharomyces cerevisiae chromosome XII.</title>
        <authorList>
            <person name="Johnston M."/>
            <person name="Hillier L.W."/>
            <person name="Riles L."/>
            <person name="Albermann K."/>
            <person name="Andre B."/>
            <person name="Ansorge W."/>
            <person name="Benes V."/>
            <person name="Brueckner M."/>
            <person name="Delius H."/>
            <person name="Dubois E."/>
            <person name="Duesterhoeft A."/>
            <person name="Entian K.-D."/>
            <person name="Floeth M."/>
            <person name="Goffeau A."/>
            <person name="Hebling U."/>
            <person name="Heumann K."/>
            <person name="Heuss-Neitzel D."/>
            <person name="Hilbert H."/>
            <person name="Hilger F."/>
            <person name="Kleine K."/>
            <person name="Koetter P."/>
            <person name="Louis E.J."/>
            <person name="Messenguy F."/>
            <person name="Mewes H.-W."/>
            <person name="Miosga T."/>
            <person name="Moestl D."/>
            <person name="Mueller-Auer S."/>
            <person name="Nentwich U."/>
            <person name="Obermaier B."/>
            <person name="Piravandi E."/>
            <person name="Pohl T.M."/>
            <person name="Portetelle D."/>
            <person name="Purnelle B."/>
            <person name="Rechmann S."/>
            <person name="Rieger M."/>
            <person name="Rinke M."/>
            <person name="Rose M."/>
            <person name="Scharfe M."/>
            <person name="Scherens B."/>
            <person name="Scholler P."/>
            <person name="Schwager C."/>
            <person name="Schwarz S."/>
            <person name="Underwood A.P."/>
            <person name="Urrestarazu L.A."/>
            <person name="Vandenbol M."/>
            <person name="Verhasselt P."/>
            <person name="Vierendeels F."/>
            <person name="Voet M."/>
            <person name="Volckaert G."/>
            <person name="Voss H."/>
            <person name="Wambutt R."/>
            <person name="Wedler E."/>
            <person name="Wedler H."/>
            <person name="Zimmermann F.K."/>
            <person name="Zollner A."/>
            <person name="Hani J."/>
            <person name="Hoheisel J.D."/>
        </authorList>
    </citation>
    <scope>NUCLEOTIDE SEQUENCE [LARGE SCALE GENOMIC DNA]</scope>
    <source>
        <strain>ATCC 204508 / S288c</strain>
    </source>
</reference>
<reference key="3">
    <citation type="journal article" date="2014" name="G3 (Bethesda)">
        <title>The reference genome sequence of Saccharomyces cerevisiae: Then and now.</title>
        <authorList>
            <person name="Engel S.R."/>
            <person name="Dietrich F.S."/>
            <person name="Fisk D.G."/>
            <person name="Binkley G."/>
            <person name="Balakrishnan R."/>
            <person name="Costanzo M.C."/>
            <person name="Dwight S.S."/>
            <person name="Hitz B.C."/>
            <person name="Karra K."/>
            <person name="Nash R.S."/>
            <person name="Weng S."/>
            <person name="Wong E.D."/>
            <person name="Lloyd P."/>
            <person name="Skrzypek M.S."/>
            <person name="Miyasato S.R."/>
            <person name="Simison M."/>
            <person name="Cherry J.M."/>
        </authorList>
    </citation>
    <scope>GENOME REANNOTATION</scope>
    <source>
        <strain>ATCC 204508 / S288c</strain>
    </source>
</reference>
<reference key="4">
    <citation type="journal article" date="2003" name="Nature">
        <title>Global analysis of protein expression in yeast.</title>
        <authorList>
            <person name="Ghaemmaghami S."/>
            <person name="Huh W.-K."/>
            <person name="Bower K."/>
            <person name="Howson R.W."/>
            <person name="Belle A."/>
            <person name="Dephoure N."/>
            <person name="O'Shea E.K."/>
            <person name="Weissman J.S."/>
        </authorList>
    </citation>
    <scope>LEVEL OF PROTEIN EXPRESSION [LARGE SCALE ANALYSIS]</scope>
</reference>
<reference key="5">
    <citation type="journal article" date="2007" name="J. Proteome Res.">
        <title>Large-scale phosphorylation analysis of alpha-factor-arrested Saccharomyces cerevisiae.</title>
        <authorList>
            <person name="Li X."/>
            <person name="Gerber S.A."/>
            <person name="Rudner A.D."/>
            <person name="Beausoleil S.A."/>
            <person name="Haas W."/>
            <person name="Villen J."/>
            <person name="Elias J.E."/>
            <person name="Gygi S.P."/>
        </authorList>
    </citation>
    <scope>PHOSPHORYLATION [LARGE SCALE ANALYSIS] AT SER-164</scope>
    <scope>IDENTIFICATION BY MASS SPECTROMETRY [LARGE SCALE ANALYSIS]</scope>
    <source>
        <strain>ADR376</strain>
    </source>
</reference>
<reference key="6">
    <citation type="journal article" date="2008" name="Mol. Cell. Proteomics">
        <title>A multidimensional chromatography technology for in-depth phosphoproteome analysis.</title>
        <authorList>
            <person name="Albuquerque C.P."/>
            <person name="Smolka M.B."/>
            <person name="Payne S.H."/>
            <person name="Bafna V."/>
            <person name="Eng J."/>
            <person name="Zhou H."/>
        </authorList>
    </citation>
    <scope>IDENTIFICATION BY MASS SPECTROMETRY [LARGE SCALE ANALYSIS]</scope>
</reference>
<reference key="7">
    <citation type="journal article" date="2009" name="Science">
        <title>Global analysis of Cdk1 substrate phosphorylation sites provides insights into evolution.</title>
        <authorList>
            <person name="Holt L.J."/>
            <person name="Tuch B.B."/>
            <person name="Villen J."/>
            <person name="Johnson A.D."/>
            <person name="Gygi S.P."/>
            <person name="Morgan D.O."/>
        </authorList>
    </citation>
    <scope>PHOSPHORYLATION [LARGE SCALE ANALYSIS] AT SER-164 AND SER-166</scope>
    <scope>IDENTIFICATION BY MASS SPECTROMETRY [LARGE SCALE ANALYSIS]</scope>
</reference>
<organism>
    <name type="scientific">Saccharomyces cerevisiae (strain ATCC 204508 / S288c)</name>
    <name type="common">Baker's yeast</name>
    <dbReference type="NCBI Taxonomy" id="559292"/>
    <lineage>
        <taxon>Eukaryota</taxon>
        <taxon>Fungi</taxon>
        <taxon>Dikarya</taxon>
        <taxon>Ascomycota</taxon>
        <taxon>Saccharomycotina</taxon>
        <taxon>Saccharomycetes</taxon>
        <taxon>Saccharomycetales</taxon>
        <taxon>Saccharomycetaceae</taxon>
        <taxon>Saccharomyces</taxon>
    </lineage>
</organism>
<comment type="function">
    <text evidence="4">Activates the CHA1 gene for L-serine dehydratase. Binds to the DNA sequence 5'-GVGGARAYRTRATTCCRC-3'.</text>
</comment>
<comment type="subcellular location">
    <subcellularLocation>
        <location evidence="5">Nucleus</location>
    </subcellularLocation>
</comment>
<comment type="miscellaneous">
    <text evidence="3">Present with 396 molecules/cell in log phase SD medium.</text>
</comment>
<dbReference type="EMBL" id="Z49975">
    <property type="protein sequence ID" value="CAA90276.1"/>
    <property type="molecule type" value="Genomic_DNA"/>
</dbReference>
<dbReference type="EMBL" id="U53876">
    <property type="protein sequence ID" value="AAB67542.1"/>
    <property type="molecule type" value="Genomic_DNA"/>
</dbReference>
<dbReference type="EMBL" id="Z73270">
    <property type="protein sequence ID" value="CAA97662.1"/>
    <property type="molecule type" value="Genomic_DNA"/>
</dbReference>
<dbReference type="EMBL" id="BK006945">
    <property type="protein sequence ID" value="DAA09414.1"/>
    <property type="molecule type" value="Genomic_DNA"/>
</dbReference>
<dbReference type="PIR" id="S59723">
    <property type="entry name" value="S59723"/>
</dbReference>
<dbReference type="RefSeq" id="NP_013199.1">
    <property type="nucleotide sequence ID" value="NM_001181985.1"/>
</dbReference>
<dbReference type="SMR" id="P43634"/>
<dbReference type="BioGRID" id="31371">
    <property type="interactions" value="131"/>
</dbReference>
<dbReference type="DIP" id="DIP-1798N"/>
<dbReference type="FunCoup" id="P43634">
    <property type="interactions" value="321"/>
</dbReference>
<dbReference type="IntAct" id="P43634">
    <property type="interactions" value="11"/>
</dbReference>
<dbReference type="MINT" id="P43634"/>
<dbReference type="STRING" id="4932.YLR098C"/>
<dbReference type="iPTMnet" id="P43634"/>
<dbReference type="PaxDb" id="4932-YLR098C"/>
<dbReference type="PeptideAtlas" id="P43634"/>
<dbReference type="EnsemblFungi" id="YLR098C_mRNA">
    <property type="protein sequence ID" value="YLR098C"/>
    <property type="gene ID" value="YLR098C"/>
</dbReference>
<dbReference type="GeneID" id="850787"/>
<dbReference type="KEGG" id="sce:YLR098C"/>
<dbReference type="AGR" id="SGD:S000004088"/>
<dbReference type="SGD" id="S000004088">
    <property type="gene designation" value="CHA4"/>
</dbReference>
<dbReference type="VEuPathDB" id="FungiDB:YLR098C"/>
<dbReference type="eggNOG" id="ENOG502QTSE">
    <property type="taxonomic scope" value="Eukaryota"/>
</dbReference>
<dbReference type="HOGENOM" id="CLU_015811_0_0_1"/>
<dbReference type="InParanoid" id="P43634"/>
<dbReference type="OMA" id="PMAWYLS"/>
<dbReference type="OrthoDB" id="2428527at2759"/>
<dbReference type="BioCyc" id="YEAST:G3O-32248-MONOMER"/>
<dbReference type="BioGRID-ORCS" id="850787">
    <property type="hits" value="2 hits in 13 CRISPR screens"/>
</dbReference>
<dbReference type="PRO" id="PR:P43634"/>
<dbReference type="Proteomes" id="UP000002311">
    <property type="component" value="Chromosome XII"/>
</dbReference>
<dbReference type="RNAct" id="P43634">
    <property type="molecule type" value="protein"/>
</dbReference>
<dbReference type="GO" id="GO:0005634">
    <property type="term" value="C:nucleus"/>
    <property type="evidence" value="ECO:0000305"/>
    <property type="project" value="SGD"/>
</dbReference>
<dbReference type="GO" id="GO:0003700">
    <property type="term" value="F:DNA-binding transcription factor activity"/>
    <property type="evidence" value="ECO:0000314"/>
    <property type="project" value="SGD"/>
</dbReference>
<dbReference type="GO" id="GO:0000981">
    <property type="term" value="F:DNA-binding transcription factor activity, RNA polymerase II-specific"/>
    <property type="evidence" value="ECO:0007669"/>
    <property type="project" value="InterPro"/>
</dbReference>
<dbReference type="GO" id="GO:0043565">
    <property type="term" value="F:sequence-specific DNA binding"/>
    <property type="evidence" value="ECO:0007005"/>
    <property type="project" value="SGD"/>
</dbReference>
<dbReference type="GO" id="GO:0008270">
    <property type="term" value="F:zinc ion binding"/>
    <property type="evidence" value="ECO:0007669"/>
    <property type="project" value="InterPro"/>
</dbReference>
<dbReference type="GO" id="GO:0009063">
    <property type="term" value="P:amino acid catabolic process"/>
    <property type="evidence" value="ECO:0000315"/>
    <property type="project" value="SGD"/>
</dbReference>
<dbReference type="GO" id="GO:0006351">
    <property type="term" value="P:DNA-templated transcription"/>
    <property type="evidence" value="ECO:0007669"/>
    <property type="project" value="InterPro"/>
</dbReference>
<dbReference type="GO" id="GO:0045893">
    <property type="term" value="P:positive regulation of DNA-templated transcription"/>
    <property type="evidence" value="ECO:0000315"/>
    <property type="project" value="SGD"/>
</dbReference>
<dbReference type="CDD" id="cd12148">
    <property type="entry name" value="fungal_TF_MHR"/>
    <property type="match status" value="1"/>
</dbReference>
<dbReference type="CDD" id="cd00067">
    <property type="entry name" value="GAL4"/>
    <property type="match status" value="1"/>
</dbReference>
<dbReference type="FunFam" id="4.10.240.10:FF:000018">
    <property type="entry name" value="Casein kinase II subunit beta"/>
    <property type="match status" value="1"/>
</dbReference>
<dbReference type="Gene3D" id="4.10.240.10">
    <property type="entry name" value="Zn(2)-C6 fungal-type DNA-binding domain"/>
    <property type="match status" value="1"/>
</dbReference>
<dbReference type="InterPro" id="IPR051615">
    <property type="entry name" value="Transcr_Regulatory_Elem"/>
</dbReference>
<dbReference type="InterPro" id="IPR007219">
    <property type="entry name" value="Transcription_factor_dom_fun"/>
</dbReference>
<dbReference type="InterPro" id="IPR036864">
    <property type="entry name" value="Zn2-C6_fun-type_DNA-bd_sf"/>
</dbReference>
<dbReference type="InterPro" id="IPR001138">
    <property type="entry name" value="Zn2Cys6_DnaBD"/>
</dbReference>
<dbReference type="PANTHER" id="PTHR31313:SF82">
    <property type="entry name" value="ACTIVATORY PROTEIN CHA4-RELATED"/>
    <property type="match status" value="1"/>
</dbReference>
<dbReference type="PANTHER" id="PTHR31313">
    <property type="entry name" value="TY1 ENHANCER ACTIVATOR"/>
    <property type="match status" value="1"/>
</dbReference>
<dbReference type="Pfam" id="PF04082">
    <property type="entry name" value="Fungal_trans"/>
    <property type="match status" value="1"/>
</dbReference>
<dbReference type="Pfam" id="PF00172">
    <property type="entry name" value="Zn_clus"/>
    <property type="match status" value="1"/>
</dbReference>
<dbReference type="SMART" id="SM00906">
    <property type="entry name" value="Fungal_trans"/>
    <property type="match status" value="1"/>
</dbReference>
<dbReference type="SMART" id="SM00066">
    <property type="entry name" value="GAL4"/>
    <property type="match status" value="1"/>
</dbReference>
<dbReference type="SUPFAM" id="SSF57701">
    <property type="entry name" value="Zn2/Cys6 DNA-binding domain"/>
    <property type="match status" value="1"/>
</dbReference>
<dbReference type="PROSITE" id="PS00463">
    <property type="entry name" value="ZN2_CY6_FUNGAL_1"/>
    <property type="match status" value="1"/>
</dbReference>
<dbReference type="PROSITE" id="PS50048">
    <property type="entry name" value="ZN2_CY6_FUNGAL_2"/>
    <property type="match status" value="1"/>
</dbReference>
<accession>P43634</accession>
<accession>D6VY98</accession>
<protein>
    <recommendedName>
        <fullName>Activatory protein CHA4</fullName>
    </recommendedName>
</protein>
<keyword id="KW-0010">Activator</keyword>
<keyword id="KW-0238">DNA-binding</keyword>
<keyword id="KW-0479">Metal-binding</keyword>
<keyword id="KW-0539">Nucleus</keyword>
<keyword id="KW-0597">Phosphoprotein</keyword>
<keyword id="KW-1185">Reference proteome</keyword>
<keyword id="KW-0804">Transcription</keyword>
<keyword id="KW-0805">Transcription regulation</keyword>
<keyword id="KW-0862">Zinc</keyword>